<protein>
    <recommendedName>
        <fullName evidence="1">Small ribosomal subunit protein uS4</fullName>
    </recommendedName>
    <alternativeName>
        <fullName evidence="2">30S ribosomal protein S4</fullName>
    </alternativeName>
</protein>
<organism>
    <name type="scientific">Mycolicibacterium vanbaalenii (strain DSM 7251 / JCM 13017 / BCRC 16820 / KCTC 9966 / NRRL B-24157 / PYR-1)</name>
    <name type="common">Mycobacterium vanbaalenii</name>
    <dbReference type="NCBI Taxonomy" id="350058"/>
    <lineage>
        <taxon>Bacteria</taxon>
        <taxon>Bacillati</taxon>
        <taxon>Actinomycetota</taxon>
        <taxon>Actinomycetes</taxon>
        <taxon>Mycobacteriales</taxon>
        <taxon>Mycobacteriaceae</taxon>
        <taxon>Mycolicibacterium</taxon>
    </lineage>
</organism>
<name>RS4_MYCVP</name>
<gene>
    <name evidence="1" type="primary">rpsD</name>
    <name type="ordered locus">Mvan_1435</name>
</gene>
<comment type="function">
    <text evidence="1">One of the primary rRNA binding proteins, it binds directly to 16S rRNA where it nucleates assembly of the body of the 30S subunit.</text>
</comment>
<comment type="function">
    <text evidence="1">With S5 and S12 plays an important role in translational accuracy.</text>
</comment>
<comment type="subunit">
    <text evidence="1">Part of the 30S ribosomal subunit. Contacts protein S5. The interaction surface between S4 and S5 is involved in control of translational fidelity.</text>
</comment>
<comment type="similarity">
    <text evidence="1">Belongs to the universal ribosomal protein uS4 family.</text>
</comment>
<dbReference type="EMBL" id="CP000511">
    <property type="protein sequence ID" value="ABM12269.1"/>
    <property type="molecule type" value="Genomic_DNA"/>
</dbReference>
<dbReference type="RefSeq" id="WP_011778695.1">
    <property type="nucleotide sequence ID" value="NZ_JACKSD010000066.1"/>
</dbReference>
<dbReference type="SMR" id="A1T519"/>
<dbReference type="STRING" id="350058.Mvan_1435"/>
<dbReference type="KEGG" id="mva:Mvan_1435"/>
<dbReference type="eggNOG" id="COG0522">
    <property type="taxonomic scope" value="Bacteria"/>
</dbReference>
<dbReference type="HOGENOM" id="CLU_092403_0_2_11"/>
<dbReference type="Proteomes" id="UP000009159">
    <property type="component" value="Chromosome"/>
</dbReference>
<dbReference type="GO" id="GO:0015935">
    <property type="term" value="C:small ribosomal subunit"/>
    <property type="evidence" value="ECO:0007669"/>
    <property type="project" value="InterPro"/>
</dbReference>
<dbReference type="GO" id="GO:0019843">
    <property type="term" value="F:rRNA binding"/>
    <property type="evidence" value="ECO:0007669"/>
    <property type="project" value="UniProtKB-UniRule"/>
</dbReference>
<dbReference type="GO" id="GO:0003735">
    <property type="term" value="F:structural constituent of ribosome"/>
    <property type="evidence" value="ECO:0007669"/>
    <property type="project" value="InterPro"/>
</dbReference>
<dbReference type="GO" id="GO:0042274">
    <property type="term" value="P:ribosomal small subunit biogenesis"/>
    <property type="evidence" value="ECO:0007669"/>
    <property type="project" value="TreeGrafter"/>
</dbReference>
<dbReference type="GO" id="GO:0006412">
    <property type="term" value="P:translation"/>
    <property type="evidence" value="ECO:0007669"/>
    <property type="project" value="UniProtKB-UniRule"/>
</dbReference>
<dbReference type="CDD" id="cd00165">
    <property type="entry name" value="S4"/>
    <property type="match status" value="1"/>
</dbReference>
<dbReference type="FunFam" id="1.10.1050.10:FF:000001">
    <property type="entry name" value="30S ribosomal protein S4"/>
    <property type="match status" value="1"/>
</dbReference>
<dbReference type="FunFam" id="3.10.290.10:FF:000001">
    <property type="entry name" value="30S ribosomal protein S4"/>
    <property type="match status" value="1"/>
</dbReference>
<dbReference type="Gene3D" id="1.10.1050.10">
    <property type="entry name" value="Ribosomal Protein S4 Delta 41, Chain A, domain 1"/>
    <property type="match status" value="1"/>
</dbReference>
<dbReference type="Gene3D" id="3.10.290.10">
    <property type="entry name" value="RNA-binding S4 domain"/>
    <property type="match status" value="1"/>
</dbReference>
<dbReference type="HAMAP" id="MF_01306_B">
    <property type="entry name" value="Ribosomal_uS4_B"/>
    <property type="match status" value="1"/>
</dbReference>
<dbReference type="InterPro" id="IPR022801">
    <property type="entry name" value="Ribosomal_uS4"/>
</dbReference>
<dbReference type="InterPro" id="IPR005709">
    <property type="entry name" value="Ribosomal_uS4_bac-type"/>
</dbReference>
<dbReference type="InterPro" id="IPR018079">
    <property type="entry name" value="Ribosomal_uS4_CS"/>
</dbReference>
<dbReference type="InterPro" id="IPR001912">
    <property type="entry name" value="Ribosomal_uS4_N"/>
</dbReference>
<dbReference type="InterPro" id="IPR002942">
    <property type="entry name" value="S4_RNA-bd"/>
</dbReference>
<dbReference type="InterPro" id="IPR036986">
    <property type="entry name" value="S4_RNA-bd_sf"/>
</dbReference>
<dbReference type="NCBIfam" id="NF003717">
    <property type="entry name" value="PRK05327.1"/>
    <property type="match status" value="1"/>
</dbReference>
<dbReference type="NCBIfam" id="TIGR01017">
    <property type="entry name" value="rpsD_bact"/>
    <property type="match status" value="1"/>
</dbReference>
<dbReference type="PANTHER" id="PTHR11831">
    <property type="entry name" value="30S 40S RIBOSOMAL PROTEIN"/>
    <property type="match status" value="1"/>
</dbReference>
<dbReference type="PANTHER" id="PTHR11831:SF4">
    <property type="entry name" value="SMALL RIBOSOMAL SUBUNIT PROTEIN US4M"/>
    <property type="match status" value="1"/>
</dbReference>
<dbReference type="Pfam" id="PF00163">
    <property type="entry name" value="Ribosomal_S4"/>
    <property type="match status" value="1"/>
</dbReference>
<dbReference type="Pfam" id="PF01479">
    <property type="entry name" value="S4"/>
    <property type="match status" value="1"/>
</dbReference>
<dbReference type="SMART" id="SM01390">
    <property type="entry name" value="Ribosomal_S4"/>
    <property type="match status" value="1"/>
</dbReference>
<dbReference type="SMART" id="SM00363">
    <property type="entry name" value="S4"/>
    <property type="match status" value="1"/>
</dbReference>
<dbReference type="SUPFAM" id="SSF55174">
    <property type="entry name" value="Alpha-L RNA-binding motif"/>
    <property type="match status" value="1"/>
</dbReference>
<dbReference type="PROSITE" id="PS00632">
    <property type="entry name" value="RIBOSOMAL_S4"/>
    <property type="match status" value="1"/>
</dbReference>
<dbReference type="PROSITE" id="PS50889">
    <property type="entry name" value="S4"/>
    <property type="match status" value="1"/>
</dbReference>
<sequence>MARYTGPVTRKSRRLGVDLVGGDQSFEKRPYPPGQHGRARIKESEYRTQLQEKQKARFTYGVMEKQFRRYYEEANRLPGKTGDNLLRILESRLDNVVYRAGLARTRRMARQLVSHGHFTVNGVKVDVPSYRVSQYDIIDVKDKSINTLPFEVARQTAGERPIPGWLQVVGERQRILVHQLPERAQIDVPLTEQLIVELYSK</sequence>
<proteinExistence type="inferred from homology"/>
<keyword id="KW-0687">Ribonucleoprotein</keyword>
<keyword id="KW-0689">Ribosomal protein</keyword>
<keyword id="KW-0694">RNA-binding</keyword>
<keyword id="KW-0699">rRNA-binding</keyword>
<reference key="1">
    <citation type="submission" date="2006-12" db="EMBL/GenBank/DDBJ databases">
        <title>Complete sequence of Mycobacterium vanbaalenii PYR-1.</title>
        <authorList>
            <consortium name="US DOE Joint Genome Institute"/>
            <person name="Copeland A."/>
            <person name="Lucas S."/>
            <person name="Lapidus A."/>
            <person name="Barry K."/>
            <person name="Detter J.C."/>
            <person name="Glavina del Rio T."/>
            <person name="Hammon N."/>
            <person name="Israni S."/>
            <person name="Dalin E."/>
            <person name="Tice H."/>
            <person name="Pitluck S."/>
            <person name="Singan V."/>
            <person name="Schmutz J."/>
            <person name="Larimer F."/>
            <person name="Land M."/>
            <person name="Hauser L."/>
            <person name="Kyrpides N."/>
            <person name="Anderson I.J."/>
            <person name="Miller C."/>
            <person name="Richardson P."/>
        </authorList>
    </citation>
    <scope>NUCLEOTIDE SEQUENCE [LARGE SCALE GENOMIC DNA]</scope>
    <source>
        <strain>DSM 7251 / JCM 13017 / BCRC 16820 / KCTC 9966 / NRRL B-24157 / PYR-1</strain>
    </source>
</reference>
<evidence type="ECO:0000255" key="1">
    <source>
        <dbReference type="HAMAP-Rule" id="MF_01306"/>
    </source>
</evidence>
<evidence type="ECO:0000305" key="2"/>
<accession>A1T519</accession>
<feature type="chain" id="PRO_0000293320" description="Small ribosomal subunit protein uS4">
    <location>
        <begin position="1"/>
        <end position="201"/>
    </location>
</feature>
<feature type="domain" description="S4 RNA-binding" evidence="1">
    <location>
        <begin position="91"/>
        <end position="151"/>
    </location>
</feature>